<keyword id="KW-0067">ATP-binding</keyword>
<keyword id="KW-1003">Cell membrane</keyword>
<keyword id="KW-0418">Kinase</keyword>
<keyword id="KW-0472">Membrane</keyword>
<keyword id="KW-0547">Nucleotide-binding</keyword>
<keyword id="KW-0597">Phosphoprotein</keyword>
<keyword id="KW-1185">Reference proteome</keyword>
<keyword id="KW-0749">Sporulation</keyword>
<keyword id="KW-0808">Transferase</keyword>
<keyword id="KW-0812">Transmembrane</keyword>
<keyword id="KW-1133">Transmembrane helix</keyword>
<keyword id="KW-0902">Two-component regulatory system</keyword>
<protein>
    <recommendedName>
        <fullName>Sporulation kinase C</fullName>
        <ecNumber>2.7.13.3</ecNumber>
    </recommendedName>
</protein>
<dbReference type="EC" id="2.7.13.3"/>
<dbReference type="EMBL" id="D37798">
    <property type="protein sequence ID" value="BAA07045.1"/>
    <property type="molecule type" value="Genomic_DNA"/>
</dbReference>
<dbReference type="EMBL" id="D37799">
    <property type="protein sequence ID" value="BAA07049.1"/>
    <property type="molecule type" value="Genomic_DNA"/>
</dbReference>
<dbReference type="EMBL" id="L34803">
    <property type="protein sequence ID" value="AAA66183.1"/>
    <property type="molecule type" value="Genomic_DNA"/>
</dbReference>
<dbReference type="EMBL" id="AF012285">
    <property type="protein sequence ID" value="AAC24924.1"/>
    <property type="molecule type" value="Genomic_DNA"/>
</dbReference>
<dbReference type="EMBL" id="AL009126">
    <property type="protein sequence ID" value="CAB13322.1"/>
    <property type="molecule type" value="Genomic_DNA"/>
</dbReference>
<dbReference type="PIR" id="I39871">
    <property type="entry name" value="I39871"/>
</dbReference>
<dbReference type="RefSeq" id="NP_389332.1">
    <property type="nucleotide sequence ID" value="NC_000964.3"/>
</dbReference>
<dbReference type="RefSeq" id="WP_003232333.1">
    <property type="nucleotide sequence ID" value="NZ_OZ025638.1"/>
</dbReference>
<dbReference type="SMR" id="P39764"/>
<dbReference type="FunCoup" id="P39764">
    <property type="interactions" value="270"/>
</dbReference>
<dbReference type="IntAct" id="P39764">
    <property type="interactions" value="1"/>
</dbReference>
<dbReference type="STRING" id="224308.BSU14490"/>
<dbReference type="PaxDb" id="224308-BSU14490"/>
<dbReference type="EnsemblBacteria" id="CAB13322">
    <property type="protein sequence ID" value="CAB13322"/>
    <property type="gene ID" value="BSU_14490"/>
</dbReference>
<dbReference type="GeneID" id="938742"/>
<dbReference type="KEGG" id="bsu:BSU14490"/>
<dbReference type="PATRIC" id="fig|224308.179.peg.1579"/>
<dbReference type="eggNOG" id="COG3852">
    <property type="taxonomic scope" value="Bacteria"/>
</dbReference>
<dbReference type="InParanoid" id="P39764"/>
<dbReference type="OrthoDB" id="9815750at2"/>
<dbReference type="PhylomeDB" id="P39764"/>
<dbReference type="BioCyc" id="BSUB:BSU14490-MONOMER"/>
<dbReference type="BRENDA" id="2.7.13.3">
    <property type="organism ID" value="658"/>
</dbReference>
<dbReference type="Proteomes" id="UP000001570">
    <property type="component" value="Chromosome"/>
</dbReference>
<dbReference type="GO" id="GO:0045121">
    <property type="term" value="C:membrane raft"/>
    <property type="evidence" value="ECO:0007669"/>
    <property type="project" value="UniProtKB-SubCell"/>
</dbReference>
<dbReference type="GO" id="GO:0005886">
    <property type="term" value="C:plasma membrane"/>
    <property type="evidence" value="ECO:0007669"/>
    <property type="project" value="UniProtKB-SubCell"/>
</dbReference>
<dbReference type="GO" id="GO:0005524">
    <property type="term" value="F:ATP binding"/>
    <property type="evidence" value="ECO:0007669"/>
    <property type="project" value="UniProtKB-KW"/>
</dbReference>
<dbReference type="GO" id="GO:0000155">
    <property type="term" value="F:phosphorelay sensor kinase activity"/>
    <property type="evidence" value="ECO:0007669"/>
    <property type="project" value="InterPro"/>
</dbReference>
<dbReference type="GO" id="GO:0006355">
    <property type="term" value="P:regulation of DNA-templated transcription"/>
    <property type="evidence" value="ECO:0007669"/>
    <property type="project" value="InterPro"/>
</dbReference>
<dbReference type="GO" id="GO:0030435">
    <property type="term" value="P:sporulation resulting in formation of a cellular spore"/>
    <property type="evidence" value="ECO:0007669"/>
    <property type="project" value="UniProtKB-KW"/>
</dbReference>
<dbReference type="CDD" id="cd00075">
    <property type="entry name" value="HATPase"/>
    <property type="match status" value="1"/>
</dbReference>
<dbReference type="CDD" id="cd00082">
    <property type="entry name" value="HisKA"/>
    <property type="match status" value="1"/>
</dbReference>
<dbReference type="CDD" id="cd00130">
    <property type="entry name" value="PAS"/>
    <property type="match status" value="1"/>
</dbReference>
<dbReference type="Gene3D" id="1.10.287.130">
    <property type="match status" value="1"/>
</dbReference>
<dbReference type="Gene3D" id="3.30.565.10">
    <property type="entry name" value="Histidine kinase-like ATPase, C-terminal domain"/>
    <property type="match status" value="1"/>
</dbReference>
<dbReference type="Gene3D" id="3.30.450.20">
    <property type="entry name" value="PAS domain"/>
    <property type="match status" value="1"/>
</dbReference>
<dbReference type="InterPro" id="IPR036890">
    <property type="entry name" value="HATPase_C_sf"/>
</dbReference>
<dbReference type="InterPro" id="IPR005467">
    <property type="entry name" value="His_kinase_dom"/>
</dbReference>
<dbReference type="InterPro" id="IPR003661">
    <property type="entry name" value="HisK_dim/P_dom"/>
</dbReference>
<dbReference type="InterPro" id="IPR036097">
    <property type="entry name" value="HisK_dim/P_sf"/>
</dbReference>
<dbReference type="InterPro" id="IPR001610">
    <property type="entry name" value="PAC"/>
</dbReference>
<dbReference type="InterPro" id="IPR000014">
    <property type="entry name" value="PAS"/>
</dbReference>
<dbReference type="InterPro" id="IPR000700">
    <property type="entry name" value="PAS-assoc_C"/>
</dbReference>
<dbReference type="InterPro" id="IPR035965">
    <property type="entry name" value="PAS-like_dom_sf"/>
</dbReference>
<dbReference type="InterPro" id="IPR013767">
    <property type="entry name" value="PAS_fold"/>
</dbReference>
<dbReference type="InterPro" id="IPR004358">
    <property type="entry name" value="Sig_transdc_His_kin-like_C"/>
</dbReference>
<dbReference type="NCBIfam" id="TIGR00229">
    <property type="entry name" value="sensory_box"/>
    <property type="match status" value="1"/>
</dbReference>
<dbReference type="PANTHER" id="PTHR43065">
    <property type="entry name" value="SENSOR HISTIDINE KINASE"/>
    <property type="match status" value="1"/>
</dbReference>
<dbReference type="PANTHER" id="PTHR43065:SF34">
    <property type="entry name" value="SPORULATION KINASE A"/>
    <property type="match status" value="1"/>
</dbReference>
<dbReference type="Pfam" id="PF02518">
    <property type="entry name" value="HATPase_c"/>
    <property type="match status" value="1"/>
</dbReference>
<dbReference type="Pfam" id="PF00512">
    <property type="entry name" value="HisKA"/>
    <property type="match status" value="1"/>
</dbReference>
<dbReference type="Pfam" id="PF00989">
    <property type="entry name" value="PAS"/>
    <property type="match status" value="1"/>
</dbReference>
<dbReference type="PRINTS" id="PR00344">
    <property type="entry name" value="BCTRLSENSOR"/>
</dbReference>
<dbReference type="SMART" id="SM00387">
    <property type="entry name" value="HATPase_c"/>
    <property type="match status" value="1"/>
</dbReference>
<dbReference type="SMART" id="SM00388">
    <property type="entry name" value="HisKA"/>
    <property type="match status" value="1"/>
</dbReference>
<dbReference type="SMART" id="SM00086">
    <property type="entry name" value="PAC"/>
    <property type="match status" value="1"/>
</dbReference>
<dbReference type="SMART" id="SM00091">
    <property type="entry name" value="PAS"/>
    <property type="match status" value="1"/>
</dbReference>
<dbReference type="SUPFAM" id="SSF55874">
    <property type="entry name" value="ATPase domain of HSP90 chaperone/DNA topoisomerase II/histidine kinase"/>
    <property type="match status" value="1"/>
</dbReference>
<dbReference type="SUPFAM" id="SSF47384">
    <property type="entry name" value="Homodimeric domain of signal transducing histidine kinase"/>
    <property type="match status" value="1"/>
</dbReference>
<dbReference type="SUPFAM" id="SSF55785">
    <property type="entry name" value="PYP-like sensor domain (PAS domain)"/>
    <property type="match status" value="1"/>
</dbReference>
<dbReference type="PROSITE" id="PS50109">
    <property type="entry name" value="HIS_KIN"/>
    <property type="match status" value="1"/>
</dbReference>
<dbReference type="PROSITE" id="PS50113">
    <property type="entry name" value="PAC"/>
    <property type="match status" value="1"/>
</dbReference>
<dbReference type="PROSITE" id="PS50112">
    <property type="entry name" value="PAS"/>
    <property type="match status" value="1"/>
</dbReference>
<name>KINC_BACSU</name>
<sequence length="428" mass="48846">MRKYQARIISIILAMIFIMFWDYLFYFIGKNPINWPVDIVYTAVTLVSVWMLAYYIDEKQQLVKKMKDNEWKYKQLSEEKNRIMDNLQEIVFQTNAKGEITYLNQAWASITGFSISECMGTMYNDYFIKEKHVADHINTQIQNKASSGMFTAKYVTKNGTIFWGEVHYKLYYDRDDQFTGSLGTMSDITERKEAEDELIEINERLARESQKLSITSELAAGIAHEVRNPLTSVSGFLQIMKTQYPDRKDYFDIIFSEIKRIDLVLSELLLLAKPQAITFKTHQLNEILKQVTTLLDTNAILSNIVIEKNFKETDGCMINGDENQLKQVFINIIKNGIEAMPKGGVVTISTAKTASHAVISVKDEGNGMPQEKLKQIGKPFYSTKEKGTGLGLPICLRILKEHDGELKIESEAGKGSVFQVVLPLKSDS</sequence>
<organism>
    <name type="scientific">Bacillus subtilis (strain 168)</name>
    <dbReference type="NCBI Taxonomy" id="224308"/>
    <lineage>
        <taxon>Bacteria</taxon>
        <taxon>Bacillati</taxon>
        <taxon>Bacillota</taxon>
        <taxon>Bacilli</taxon>
        <taxon>Bacillales</taxon>
        <taxon>Bacillaceae</taxon>
        <taxon>Bacillus</taxon>
    </lineage>
</organism>
<gene>
    <name evidence="10" type="primary">kinC</name>
    <name type="synonym">mskA</name>
    <name type="synonym">ssb</name>
    <name type="ordered locus">BSU14490</name>
</gene>
<comment type="function">
    <text evidence="5 11">Phosphorylates the sporulation-regulatory protein Spo0A a transcription factor that also controls biofilm formation (Probable). Requires FloT and FloA for localization to DRMs and for activity (PubMed:20713508).</text>
</comment>
<comment type="catalytic activity">
    <reaction>
        <text>ATP + protein L-histidine = ADP + protein N-phospho-L-histidine.</text>
        <dbReference type="EC" id="2.7.13.3"/>
    </reaction>
</comment>
<comment type="subunit">
    <text evidence="7 8">Oligomerizes, probably forms homodimers; oligomerization is assisted by FloT. Interacts with FloT (PubMed:26297017). Another study shows only rare colocalization with FloT or FloA membrane assemblies. KinC membrane assemblies are more mobile than FloT membrane assemblies (PubMed:27362352).</text>
</comment>
<comment type="subcellular location">
    <subcellularLocation>
        <location evidence="5 7 8">Cell membrane</location>
        <topology>Multi-pass membrane protein</topology>
    </subcellularLocation>
    <subcellularLocation>
        <location evidence="5 7 8">Membrane raft</location>
        <topology evidence="1">Multi-pass membrane protein</topology>
    </subcellularLocation>
    <text evidence="5 7 8">Present in detergent-resistant membrane (DRM) fractions that may be equivalent to eukaryotic membrane rafts; these rafts include proteins involved in signaling, molecule trafficking and protein secretion. Lost from DRM in the absence of farnesyl diphosphate phosphatase YisP or when cells are treated with YisP inhibitor zaragozic acid. Colocalizes with FloT in DRMs (PubMed:20713508, PubMed:26297017). Another study shows KinC foci are membrane assemblies of 85-110 nm, but found no evidence of colocalization of these foci with FloA or FloT (PubMed:27362352).</text>
</comment>
<comment type="induction">
    <text evidence="9">Induced at the onset of sporulation, shuts off at T3. May be under the control of Spo0A.</text>
</comment>
<comment type="disruption phenotype">
    <text evidence="6 7 9">No observable effect on sporulation (PubMed:8002615). Forms a weak or no biofilm, wild-type sporulation (PubMed:22882210, PubMed:26297017).</text>
</comment>
<proteinExistence type="evidence at protein level"/>
<evidence type="ECO:0000255" key="1"/>
<evidence type="ECO:0000255" key="2">
    <source>
        <dbReference type="PROSITE-ProRule" id="PRU00107"/>
    </source>
</evidence>
<evidence type="ECO:0000255" key="3">
    <source>
        <dbReference type="PROSITE-ProRule" id="PRU00140"/>
    </source>
</evidence>
<evidence type="ECO:0000255" key="4">
    <source>
        <dbReference type="PROSITE-ProRule" id="PRU00141"/>
    </source>
</evidence>
<evidence type="ECO:0000269" key="5">
    <source>
    </source>
</evidence>
<evidence type="ECO:0000269" key="6">
    <source>
    </source>
</evidence>
<evidence type="ECO:0000269" key="7">
    <source>
    </source>
</evidence>
<evidence type="ECO:0000269" key="8">
    <source>
    </source>
</evidence>
<evidence type="ECO:0000269" key="9">
    <source>
    </source>
</evidence>
<evidence type="ECO:0000303" key="10">
    <source>
    </source>
</evidence>
<evidence type="ECO:0000305" key="11">
    <source>
    </source>
</evidence>
<reference key="1">
    <citation type="journal article" date="1995" name="J. Bacteriol.">
        <title>Analysis of a suppressor mutation ssb (kinC) of sur0B20 (spo0A) mutation in Bacillus subtilis reveals that kinC encodes a histidine protein kinase.</title>
        <authorList>
            <person name="Kobayashi K."/>
            <person name="Shoji K."/>
            <person name="Shimizu T."/>
            <person name="Nakano K."/>
            <person name="Sato T."/>
            <person name="Kobayashi Y."/>
        </authorList>
    </citation>
    <scope>NUCLEOTIDE SEQUENCE [GENOMIC DNA]</scope>
    <scope>INDUCTION</scope>
    <scope>DISRUPTION PHENOTYPE</scope>
    <source>
        <strain>168 / JH642</strain>
    </source>
</reference>
<reference key="2">
    <citation type="journal article" date="1995" name="J. Bacteriol.">
        <title>Isolation and characterization of kinC, a gene that encodes a sensor kinase homologous to the sporulation sensor kinases KinA and KinB in Bacillus subtilis.</title>
        <authorList>
            <person name="Ledeaux J.R."/>
            <person name="Grossman A.D."/>
        </authorList>
    </citation>
    <scope>NUCLEOTIDE SEQUENCE [GENOMIC DNA]</scope>
    <scope>FUNCTION</scope>
</reference>
<reference key="3">
    <citation type="journal article" date="1996" name="Microbiology">
        <title>The ampS-nprE (124 degrees-127 degrees) region of the Bacillus subtilis 168 chromosome: sequencing of a 27 kb segment and identification of several genes in the area.</title>
        <authorList>
            <person name="Winters P."/>
            <person name="Caldwell R.M."/>
            <person name="Enfield L."/>
            <person name="Ferrari E."/>
        </authorList>
    </citation>
    <scope>NUCLEOTIDE SEQUENCE [GENOMIC DNA]</scope>
    <source>
        <strain>168</strain>
    </source>
</reference>
<reference key="4">
    <citation type="submission" date="1997-07" db="EMBL/GenBank/DDBJ databases">
        <title>Sequence analysis of the mobA-ampS region of the Bacillus subtilis chromosome.</title>
        <authorList>
            <person name="Caldwell R.M."/>
            <person name="Ferrari E."/>
        </authorList>
    </citation>
    <scope>NUCLEOTIDE SEQUENCE [GENOMIC DNA]</scope>
    <source>
        <strain>168</strain>
    </source>
</reference>
<reference key="5">
    <citation type="journal article" date="1997" name="Nature">
        <title>The complete genome sequence of the Gram-positive bacterium Bacillus subtilis.</title>
        <authorList>
            <person name="Kunst F."/>
            <person name="Ogasawara N."/>
            <person name="Moszer I."/>
            <person name="Albertini A.M."/>
            <person name="Alloni G."/>
            <person name="Azevedo V."/>
            <person name="Bertero M.G."/>
            <person name="Bessieres P."/>
            <person name="Bolotin A."/>
            <person name="Borchert S."/>
            <person name="Borriss R."/>
            <person name="Boursier L."/>
            <person name="Brans A."/>
            <person name="Braun M."/>
            <person name="Brignell S.C."/>
            <person name="Bron S."/>
            <person name="Brouillet S."/>
            <person name="Bruschi C.V."/>
            <person name="Caldwell B."/>
            <person name="Capuano V."/>
            <person name="Carter N.M."/>
            <person name="Choi S.-K."/>
            <person name="Codani J.-J."/>
            <person name="Connerton I.F."/>
            <person name="Cummings N.J."/>
            <person name="Daniel R.A."/>
            <person name="Denizot F."/>
            <person name="Devine K.M."/>
            <person name="Duesterhoeft A."/>
            <person name="Ehrlich S.D."/>
            <person name="Emmerson P.T."/>
            <person name="Entian K.-D."/>
            <person name="Errington J."/>
            <person name="Fabret C."/>
            <person name="Ferrari E."/>
            <person name="Foulger D."/>
            <person name="Fritz C."/>
            <person name="Fujita M."/>
            <person name="Fujita Y."/>
            <person name="Fuma S."/>
            <person name="Galizzi A."/>
            <person name="Galleron N."/>
            <person name="Ghim S.-Y."/>
            <person name="Glaser P."/>
            <person name="Goffeau A."/>
            <person name="Golightly E.J."/>
            <person name="Grandi G."/>
            <person name="Guiseppi G."/>
            <person name="Guy B.J."/>
            <person name="Haga K."/>
            <person name="Haiech J."/>
            <person name="Harwood C.R."/>
            <person name="Henaut A."/>
            <person name="Hilbert H."/>
            <person name="Holsappel S."/>
            <person name="Hosono S."/>
            <person name="Hullo M.-F."/>
            <person name="Itaya M."/>
            <person name="Jones L.-M."/>
            <person name="Joris B."/>
            <person name="Karamata D."/>
            <person name="Kasahara Y."/>
            <person name="Klaerr-Blanchard M."/>
            <person name="Klein C."/>
            <person name="Kobayashi Y."/>
            <person name="Koetter P."/>
            <person name="Koningstein G."/>
            <person name="Krogh S."/>
            <person name="Kumano M."/>
            <person name="Kurita K."/>
            <person name="Lapidus A."/>
            <person name="Lardinois S."/>
            <person name="Lauber J."/>
            <person name="Lazarevic V."/>
            <person name="Lee S.-M."/>
            <person name="Levine A."/>
            <person name="Liu H."/>
            <person name="Masuda S."/>
            <person name="Mauel C."/>
            <person name="Medigue C."/>
            <person name="Medina N."/>
            <person name="Mellado R.P."/>
            <person name="Mizuno M."/>
            <person name="Moestl D."/>
            <person name="Nakai S."/>
            <person name="Noback M."/>
            <person name="Noone D."/>
            <person name="O'Reilly M."/>
            <person name="Ogawa K."/>
            <person name="Ogiwara A."/>
            <person name="Oudega B."/>
            <person name="Park S.-H."/>
            <person name="Parro V."/>
            <person name="Pohl T.M."/>
            <person name="Portetelle D."/>
            <person name="Porwollik S."/>
            <person name="Prescott A.M."/>
            <person name="Presecan E."/>
            <person name="Pujic P."/>
            <person name="Purnelle B."/>
            <person name="Rapoport G."/>
            <person name="Rey M."/>
            <person name="Reynolds S."/>
            <person name="Rieger M."/>
            <person name="Rivolta C."/>
            <person name="Rocha E."/>
            <person name="Roche B."/>
            <person name="Rose M."/>
            <person name="Sadaie Y."/>
            <person name="Sato T."/>
            <person name="Scanlan E."/>
            <person name="Schleich S."/>
            <person name="Schroeter R."/>
            <person name="Scoffone F."/>
            <person name="Sekiguchi J."/>
            <person name="Sekowska A."/>
            <person name="Seror S.J."/>
            <person name="Serror P."/>
            <person name="Shin B.-S."/>
            <person name="Soldo B."/>
            <person name="Sorokin A."/>
            <person name="Tacconi E."/>
            <person name="Takagi T."/>
            <person name="Takahashi H."/>
            <person name="Takemaru K."/>
            <person name="Takeuchi M."/>
            <person name="Tamakoshi A."/>
            <person name="Tanaka T."/>
            <person name="Terpstra P."/>
            <person name="Tognoni A."/>
            <person name="Tosato V."/>
            <person name="Uchiyama S."/>
            <person name="Vandenbol M."/>
            <person name="Vannier F."/>
            <person name="Vassarotti A."/>
            <person name="Viari A."/>
            <person name="Wambutt R."/>
            <person name="Wedler E."/>
            <person name="Wedler H."/>
            <person name="Weitzenegger T."/>
            <person name="Winters P."/>
            <person name="Wipat A."/>
            <person name="Yamamoto H."/>
            <person name="Yamane K."/>
            <person name="Yasumoto K."/>
            <person name="Yata K."/>
            <person name="Yoshida K."/>
            <person name="Yoshikawa H.-F."/>
            <person name="Zumstein E."/>
            <person name="Yoshikawa H."/>
            <person name="Danchin A."/>
        </authorList>
    </citation>
    <scope>NUCLEOTIDE SEQUENCE [LARGE SCALE GENOMIC DNA]</scope>
    <source>
        <strain>168</strain>
    </source>
</reference>
<reference key="6">
    <citation type="journal article" date="2010" name="Genes Dev.">
        <title>Functional microdomains in bacterial membranes.</title>
        <authorList>
            <person name="Lopez D."/>
            <person name="Kolter R."/>
        </authorList>
    </citation>
    <scope>FUNCTION</scope>
    <scope>SUBCELLULAR LOCATION</scope>
    <source>
        <strain>168 / Marburg / ATCC 6051 / DSM 10 / JCM 1465 / NBRC 13719 / NCIMB 3610 / NRRL NRS-744 / VKM B-501</strain>
    </source>
</reference>
<reference key="7">
    <citation type="journal article" date="2012" name="Mol. Microbiol.">
        <title>The biofilm formation defect of a Bacillus subtilis flotillin-defective mutant involves the protease FtsH.</title>
        <authorList>
            <person name="Yepes A."/>
            <person name="Schneider J."/>
            <person name="Mielich B."/>
            <person name="Koch G."/>
            <person name="Garcia-Betancur J.C."/>
            <person name="Ramamurthi K.S."/>
            <person name="Vlamakis H."/>
            <person name="Lopez D."/>
        </authorList>
    </citation>
    <scope>DISRUPTION PHENOTYPE</scope>
    <source>
        <strain>168 / Marburg / ATCC 6051 / DSM 10 / JCM 1465 / NBRC 13719 / NCIMB 3610 / NRRL NRS-744 / VKM B-501</strain>
    </source>
</reference>
<reference key="8">
    <citation type="journal article" date="2015" name="Microbiology">
        <title>In vivo characterization of the scaffold activity of flotillin on the membrane kinase KinC of Bacillus subtilis.</title>
        <authorList>
            <person name="Schneider J."/>
            <person name="Mielich-Suess B."/>
            <person name="Boehme R."/>
            <person name="Lopez D."/>
        </authorList>
    </citation>
    <scope>SUBUNIT</scope>
    <scope>INTERACTION WITH FLOT</scope>
    <scope>SUBCELLULAR LOCATION</scope>
    <scope>DISRUPTION PHENOTYPE</scope>
    <source>
        <strain>168 / Marburg / ATCC 6051 / DSM 10 / JCM 1465 / NBRC 13719 / NCIMB 3610 / NRRL NRS-744 / VKM B-501</strain>
    </source>
</reference>
<reference key="9">
    <citation type="journal article" date="2016" name="PLoS Genet.">
        <title>Super Resolution Fluorescence Microscopy and Tracking of Bacterial Flotillin (Reggie) Paralogs Provide Evidence for Defined-Sized Protein Microdomains within the Bacterial Membrane but Absence of Clusters Containing Detergent-Resistant Proteins.</title>
        <authorList>
            <person name="Dempwolff F."/>
            <person name="Schmidt F.K."/>
            <person name="Hervas A.B."/>
            <person name="Stroh A."/>
            <person name="Roesch T.C."/>
            <person name="Riese C.N."/>
            <person name="Dersch S."/>
            <person name="Heimerl T."/>
            <person name="Lucena D."/>
            <person name="Huelsbusch N."/>
            <person name="Stuermer C.A."/>
            <person name="Takeshita N."/>
            <person name="Fischer R."/>
            <person name="Eckhardt B."/>
            <person name="Graumann P.L."/>
        </authorList>
    </citation>
    <scope>SUBUNIT</scope>
    <scope>SUBCELLULAR LOCATION</scope>
    <source>
        <strain>168 / PY79</strain>
    </source>
</reference>
<accession>P39764</accession>
<feature type="chain" id="PRO_0000074779" description="Sporulation kinase C">
    <location>
        <begin position="1"/>
        <end position="428"/>
    </location>
</feature>
<feature type="transmembrane region" description="Helical" evidence="1">
    <location>
        <begin position="8"/>
        <end position="28"/>
    </location>
</feature>
<feature type="transmembrane region" description="Helical" evidence="1">
    <location>
        <begin position="36"/>
        <end position="56"/>
    </location>
</feature>
<feature type="domain" description="PAS" evidence="3">
    <location>
        <begin position="76"/>
        <end position="147"/>
    </location>
</feature>
<feature type="domain" description="PAC" evidence="4">
    <location>
        <begin position="148"/>
        <end position="200"/>
    </location>
</feature>
<feature type="domain" description="Histidine kinase" evidence="2">
    <location>
        <begin position="221"/>
        <end position="426"/>
    </location>
</feature>
<feature type="modified residue" description="Phosphohistidine; by autocatalysis" evidence="2">
    <location>
        <position position="224"/>
    </location>
</feature>